<evidence type="ECO:0000255" key="1">
    <source>
        <dbReference type="HAMAP-Rule" id="MF_01220"/>
    </source>
</evidence>
<feature type="chain" id="PRO_0000323981" description="Uridylate kinase">
    <location>
        <begin position="1"/>
        <end position="237"/>
    </location>
</feature>
<feature type="binding site" evidence="1">
    <location>
        <begin position="10"/>
        <end position="13"/>
    </location>
    <ligand>
        <name>ATP</name>
        <dbReference type="ChEBI" id="CHEBI:30616"/>
    </ligand>
</feature>
<feature type="binding site" evidence="1">
    <location>
        <position position="51"/>
    </location>
    <ligand>
        <name>UMP</name>
        <dbReference type="ChEBI" id="CHEBI:57865"/>
    </ligand>
</feature>
<feature type="binding site" evidence="1">
    <location>
        <position position="52"/>
    </location>
    <ligand>
        <name>ATP</name>
        <dbReference type="ChEBI" id="CHEBI:30616"/>
    </ligand>
</feature>
<feature type="binding site" evidence="1">
    <location>
        <position position="56"/>
    </location>
    <ligand>
        <name>ATP</name>
        <dbReference type="ChEBI" id="CHEBI:30616"/>
    </ligand>
</feature>
<feature type="binding site" evidence="1">
    <location>
        <position position="71"/>
    </location>
    <ligand>
        <name>UMP</name>
        <dbReference type="ChEBI" id="CHEBI:57865"/>
    </ligand>
</feature>
<feature type="binding site" evidence="1">
    <location>
        <begin position="133"/>
        <end position="140"/>
    </location>
    <ligand>
        <name>UMP</name>
        <dbReference type="ChEBI" id="CHEBI:57865"/>
    </ligand>
</feature>
<feature type="binding site" evidence="1">
    <location>
        <position position="160"/>
    </location>
    <ligand>
        <name>ATP</name>
        <dbReference type="ChEBI" id="CHEBI:30616"/>
    </ligand>
</feature>
<feature type="binding site" evidence="1">
    <location>
        <position position="166"/>
    </location>
    <ligand>
        <name>ATP</name>
        <dbReference type="ChEBI" id="CHEBI:30616"/>
    </ligand>
</feature>
<feature type="binding site" evidence="1">
    <location>
        <position position="169"/>
    </location>
    <ligand>
        <name>ATP</name>
        <dbReference type="ChEBI" id="CHEBI:30616"/>
    </ligand>
</feature>
<protein>
    <recommendedName>
        <fullName evidence="1">Uridylate kinase</fullName>
        <shortName evidence="1">UK</shortName>
        <ecNumber evidence="1">2.7.4.22</ecNumber>
    </recommendedName>
    <alternativeName>
        <fullName evidence="1">Uridine monophosphate kinase</fullName>
        <shortName evidence="1">UMP kinase</shortName>
        <shortName evidence="1">UMPK</shortName>
    </alternativeName>
</protein>
<accession>A5CXD7</accession>
<sequence length="237" mass="25475">MSKYKRILLKLSGEALASTTNIIDPVTLNKIVDIIKSVLSQNIEIAIVIGGGNIFRGETLTKTGINRITSDHIGMLSTIINALAIADTCQKNKVDALVMSGLSIGGGICNSINHIYAKQALKKGKVIIFCAGTGNPCFTTDTGAALRAIEIGADAIFKATKVDGIYTDDPVKNPNAKRYNSLSFDEAIEKNLQIMDVSAFALCRKHDLEICVFSMLENTNTLSDLLKGKLLGTIVRK</sequence>
<gene>
    <name evidence="1" type="primary">pyrH</name>
    <name type="ordered locus">COSY_0247</name>
</gene>
<keyword id="KW-0067">ATP-binding</keyword>
<keyword id="KW-0963">Cytoplasm</keyword>
<keyword id="KW-0418">Kinase</keyword>
<keyword id="KW-0547">Nucleotide-binding</keyword>
<keyword id="KW-0665">Pyrimidine biosynthesis</keyword>
<keyword id="KW-1185">Reference proteome</keyword>
<keyword id="KW-0808">Transferase</keyword>
<name>PYRH_VESOH</name>
<dbReference type="EC" id="2.7.4.22" evidence="1"/>
<dbReference type="EMBL" id="AP009247">
    <property type="protein sequence ID" value="BAF61377.1"/>
    <property type="molecule type" value="Genomic_DNA"/>
</dbReference>
<dbReference type="RefSeq" id="WP_011929647.1">
    <property type="nucleotide sequence ID" value="NC_009465.1"/>
</dbReference>
<dbReference type="SMR" id="A5CXD7"/>
<dbReference type="STRING" id="412965.COSY_0247"/>
<dbReference type="KEGG" id="vok:COSY_0247"/>
<dbReference type="eggNOG" id="COG0528">
    <property type="taxonomic scope" value="Bacteria"/>
</dbReference>
<dbReference type="HOGENOM" id="CLU_033861_0_0_6"/>
<dbReference type="OrthoDB" id="9807458at2"/>
<dbReference type="UniPathway" id="UPA00159">
    <property type="reaction ID" value="UER00275"/>
</dbReference>
<dbReference type="Proteomes" id="UP000000247">
    <property type="component" value="Chromosome"/>
</dbReference>
<dbReference type="GO" id="GO:0005829">
    <property type="term" value="C:cytosol"/>
    <property type="evidence" value="ECO:0007669"/>
    <property type="project" value="TreeGrafter"/>
</dbReference>
<dbReference type="GO" id="GO:0005524">
    <property type="term" value="F:ATP binding"/>
    <property type="evidence" value="ECO:0007669"/>
    <property type="project" value="UniProtKB-KW"/>
</dbReference>
<dbReference type="GO" id="GO:0033862">
    <property type="term" value="F:UMP kinase activity"/>
    <property type="evidence" value="ECO:0007669"/>
    <property type="project" value="UniProtKB-EC"/>
</dbReference>
<dbReference type="GO" id="GO:0044210">
    <property type="term" value="P:'de novo' CTP biosynthetic process"/>
    <property type="evidence" value="ECO:0007669"/>
    <property type="project" value="UniProtKB-UniRule"/>
</dbReference>
<dbReference type="GO" id="GO:0006225">
    <property type="term" value="P:UDP biosynthetic process"/>
    <property type="evidence" value="ECO:0007669"/>
    <property type="project" value="TreeGrafter"/>
</dbReference>
<dbReference type="CDD" id="cd04254">
    <property type="entry name" value="AAK_UMPK-PyrH-Ec"/>
    <property type="match status" value="1"/>
</dbReference>
<dbReference type="FunFam" id="3.40.1160.10:FF:000001">
    <property type="entry name" value="Uridylate kinase"/>
    <property type="match status" value="1"/>
</dbReference>
<dbReference type="Gene3D" id="3.40.1160.10">
    <property type="entry name" value="Acetylglutamate kinase-like"/>
    <property type="match status" value="1"/>
</dbReference>
<dbReference type="HAMAP" id="MF_01220_B">
    <property type="entry name" value="PyrH_B"/>
    <property type="match status" value="1"/>
</dbReference>
<dbReference type="InterPro" id="IPR036393">
    <property type="entry name" value="AceGlu_kinase-like_sf"/>
</dbReference>
<dbReference type="InterPro" id="IPR001048">
    <property type="entry name" value="Asp/Glu/Uridylate_kinase"/>
</dbReference>
<dbReference type="InterPro" id="IPR011817">
    <property type="entry name" value="Uridylate_kinase"/>
</dbReference>
<dbReference type="InterPro" id="IPR015963">
    <property type="entry name" value="Uridylate_kinase_bac"/>
</dbReference>
<dbReference type="NCBIfam" id="TIGR02075">
    <property type="entry name" value="pyrH_bact"/>
    <property type="match status" value="1"/>
</dbReference>
<dbReference type="PANTHER" id="PTHR42833">
    <property type="entry name" value="URIDYLATE KINASE"/>
    <property type="match status" value="1"/>
</dbReference>
<dbReference type="PANTHER" id="PTHR42833:SF4">
    <property type="entry name" value="URIDYLATE KINASE PUMPKIN, CHLOROPLASTIC"/>
    <property type="match status" value="1"/>
</dbReference>
<dbReference type="Pfam" id="PF00696">
    <property type="entry name" value="AA_kinase"/>
    <property type="match status" value="1"/>
</dbReference>
<dbReference type="PIRSF" id="PIRSF005650">
    <property type="entry name" value="Uridylate_kin"/>
    <property type="match status" value="1"/>
</dbReference>
<dbReference type="SUPFAM" id="SSF53633">
    <property type="entry name" value="Carbamate kinase-like"/>
    <property type="match status" value="1"/>
</dbReference>
<reference key="1">
    <citation type="journal article" date="2007" name="Curr. Biol.">
        <title>Reduced genome of the thioautotrophic intracellular symbiont in a deep-sea clam, Calyptogena okutanii.</title>
        <authorList>
            <person name="Kuwahara H."/>
            <person name="Yoshida T."/>
            <person name="Takaki Y."/>
            <person name="Shimamura S."/>
            <person name="Nishi S."/>
            <person name="Harada M."/>
            <person name="Matsuyama K."/>
            <person name="Takishita K."/>
            <person name="Kawato M."/>
            <person name="Uematsu K."/>
            <person name="Fujiwara Y."/>
            <person name="Sato T."/>
            <person name="Kato C."/>
            <person name="Kitagawa M."/>
            <person name="Kato I."/>
            <person name="Maruyama T."/>
        </authorList>
    </citation>
    <scope>NUCLEOTIDE SEQUENCE [LARGE SCALE GENOMIC DNA]</scope>
    <source>
        <strain>HA</strain>
    </source>
</reference>
<proteinExistence type="inferred from homology"/>
<comment type="function">
    <text evidence="1">Catalyzes the reversible phosphorylation of UMP to UDP.</text>
</comment>
<comment type="catalytic activity">
    <reaction evidence="1">
        <text>UMP + ATP = UDP + ADP</text>
        <dbReference type="Rhea" id="RHEA:24400"/>
        <dbReference type="ChEBI" id="CHEBI:30616"/>
        <dbReference type="ChEBI" id="CHEBI:57865"/>
        <dbReference type="ChEBI" id="CHEBI:58223"/>
        <dbReference type="ChEBI" id="CHEBI:456216"/>
        <dbReference type="EC" id="2.7.4.22"/>
    </reaction>
</comment>
<comment type="activity regulation">
    <text evidence="1">Inhibited by UTP.</text>
</comment>
<comment type="pathway">
    <text evidence="1">Pyrimidine metabolism; CTP biosynthesis via de novo pathway; UDP from UMP (UMPK route): step 1/1.</text>
</comment>
<comment type="subunit">
    <text evidence="1">Homohexamer.</text>
</comment>
<comment type="subcellular location">
    <subcellularLocation>
        <location evidence="1">Cytoplasm</location>
    </subcellularLocation>
</comment>
<comment type="similarity">
    <text evidence="1">Belongs to the UMP kinase family.</text>
</comment>
<organism>
    <name type="scientific">Vesicomyosocius okutanii subsp. Calyptogena okutanii (strain HA)</name>
    <dbReference type="NCBI Taxonomy" id="412965"/>
    <lineage>
        <taxon>Bacteria</taxon>
        <taxon>Pseudomonadati</taxon>
        <taxon>Pseudomonadota</taxon>
        <taxon>Gammaproteobacteria</taxon>
        <taxon>Candidatus Pseudothioglobaceae</taxon>
        <taxon>Candidatus Vesicomyosocius</taxon>
    </lineage>
</organism>